<organism>
    <name type="scientific">Salmonella enteritidis PT4 (strain P125109)</name>
    <dbReference type="NCBI Taxonomy" id="550537"/>
    <lineage>
        <taxon>Bacteria</taxon>
        <taxon>Pseudomonadati</taxon>
        <taxon>Pseudomonadota</taxon>
        <taxon>Gammaproteobacteria</taxon>
        <taxon>Enterobacterales</taxon>
        <taxon>Enterobacteriaceae</taxon>
        <taxon>Salmonella</taxon>
    </lineage>
</organism>
<evidence type="ECO:0000255" key="1">
    <source>
        <dbReference type="HAMAP-Rule" id="MF_01832"/>
    </source>
</evidence>
<comment type="function">
    <text evidence="1">Participates in cysteine desulfuration mediated by SufS. Cysteine desulfuration mobilizes sulfur from L-cysteine to yield L-alanine and constitutes an essential step in sulfur metabolism for biosynthesis of a variety of sulfur-containing biomolecules. Functions as a sulfur acceptor for SufS, by mediating the direct transfer of the sulfur atom from the S-sulfanylcysteine of SufS, an intermediate product of cysteine desulfuration process.</text>
</comment>
<comment type="pathway">
    <text evidence="1">Cofactor biosynthesis; iron-sulfur cluster biosynthesis.</text>
</comment>
<comment type="subunit">
    <text evidence="1">Homodimer. Interacts with SufS.</text>
</comment>
<comment type="subcellular location">
    <subcellularLocation>
        <location evidence="1">Cytoplasm</location>
    </subcellularLocation>
</comment>
<comment type="similarity">
    <text evidence="1">Belongs to the SufE family.</text>
</comment>
<accession>B5QVS8</accession>
<protein>
    <recommendedName>
        <fullName evidence="1">Cysteine desulfuration protein SufE</fullName>
    </recommendedName>
</protein>
<feature type="chain" id="PRO_1000188332" description="Cysteine desulfuration protein SufE">
    <location>
        <begin position="1"/>
        <end position="138"/>
    </location>
</feature>
<feature type="active site" description="Cysteine persulfide intermediate" evidence="1">
    <location>
        <position position="51"/>
    </location>
</feature>
<sequence>MAALPDKEKLLRNFTRCANWEEKYLYIIELGQRLAELNPQDRNPQNTIHGCQSQVWIVMRRNANGIIELQGDSDAAIVKGLMAVVFILYHQMTAQDIVHFDVRPWFEKMALAQHLTPSRSQGLEAMIRAIRAKAATLS</sequence>
<keyword id="KW-0963">Cytoplasm</keyword>
<name>SUFE_SALEP</name>
<gene>
    <name evidence="1" type="primary">sufE</name>
    <name type="ordered locus">SEN1671</name>
</gene>
<dbReference type="EMBL" id="AM933172">
    <property type="protein sequence ID" value="CAR33253.1"/>
    <property type="molecule type" value="Genomic_DNA"/>
</dbReference>
<dbReference type="RefSeq" id="WP_000729468.1">
    <property type="nucleotide sequence ID" value="NC_011294.1"/>
</dbReference>
<dbReference type="SMR" id="B5QVS8"/>
<dbReference type="KEGG" id="set:SEN1671"/>
<dbReference type="HOGENOM" id="CLU_124502_1_1_6"/>
<dbReference type="UniPathway" id="UPA00266"/>
<dbReference type="Proteomes" id="UP000000613">
    <property type="component" value="Chromosome"/>
</dbReference>
<dbReference type="GO" id="GO:0005737">
    <property type="term" value="C:cytoplasm"/>
    <property type="evidence" value="ECO:0007669"/>
    <property type="project" value="UniProtKB-SubCell"/>
</dbReference>
<dbReference type="GO" id="GO:0016226">
    <property type="term" value="P:iron-sulfur cluster assembly"/>
    <property type="evidence" value="ECO:0007669"/>
    <property type="project" value="InterPro"/>
</dbReference>
<dbReference type="GO" id="GO:0006790">
    <property type="term" value="P:sulfur compound metabolic process"/>
    <property type="evidence" value="ECO:0007669"/>
    <property type="project" value="InterPro"/>
</dbReference>
<dbReference type="Gene3D" id="3.90.1010.10">
    <property type="match status" value="1"/>
</dbReference>
<dbReference type="HAMAP" id="MF_01832">
    <property type="entry name" value="SufE"/>
    <property type="match status" value="1"/>
</dbReference>
<dbReference type="InterPro" id="IPR023939">
    <property type="entry name" value="Cysteine_desulfuration_SufE"/>
</dbReference>
<dbReference type="InterPro" id="IPR003808">
    <property type="entry name" value="Fe-S_metab-assoc_dom"/>
</dbReference>
<dbReference type="NCBIfam" id="NF006792">
    <property type="entry name" value="PRK09296.1"/>
    <property type="match status" value="1"/>
</dbReference>
<dbReference type="PANTHER" id="PTHR43597:SF3">
    <property type="entry name" value="CYSTEINE DESULFURATION PROTEIN SUFE"/>
    <property type="match status" value="1"/>
</dbReference>
<dbReference type="PANTHER" id="PTHR43597">
    <property type="entry name" value="SULFUR ACCEPTOR PROTEIN CSDE"/>
    <property type="match status" value="1"/>
</dbReference>
<dbReference type="Pfam" id="PF02657">
    <property type="entry name" value="SufE"/>
    <property type="match status" value="1"/>
</dbReference>
<dbReference type="SUPFAM" id="SSF82649">
    <property type="entry name" value="SufE/NifU"/>
    <property type="match status" value="1"/>
</dbReference>
<proteinExistence type="inferred from homology"/>
<reference key="1">
    <citation type="journal article" date="2008" name="Genome Res.">
        <title>Comparative genome analysis of Salmonella enteritidis PT4 and Salmonella gallinarum 287/91 provides insights into evolutionary and host adaptation pathways.</title>
        <authorList>
            <person name="Thomson N.R."/>
            <person name="Clayton D.J."/>
            <person name="Windhorst D."/>
            <person name="Vernikos G."/>
            <person name="Davidson S."/>
            <person name="Churcher C."/>
            <person name="Quail M.A."/>
            <person name="Stevens M."/>
            <person name="Jones M.A."/>
            <person name="Watson M."/>
            <person name="Barron A."/>
            <person name="Layton A."/>
            <person name="Pickard D."/>
            <person name="Kingsley R.A."/>
            <person name="Bignell A."/>
            <person name="Clark L."/>
            <person name="Harris B."/>
            <person name="Ormond D."/>
            <person name="Abdellah Z."/>
            <person name="Brooks K."/>
            <person name="Cherevach I."/>
            <person name="Chillingworth T."/>
            <person name="Woodward J."/>
            <person name="Norberczak H."/>
            <person name="Lord A."/>
            <person name="Arrowsmith C."/>
            <person name="Jagels K."/>
            <person name="Moule S."/>
            <person name="Mungall K."/>
            <person name="Saunders M."/>
            <person name="Whitehead S."/>
            <person name="Chabalgoity J.A."/>
            <person name="Maskell D."/>
            <person name="Humphreys T."/>
            <person name="Roberts M."/>
            <person name="Barrow P.A."/>
            <person name="Dougan G."/>
            <person name="Parkhill J."/>
        </authorList>
    </citation>
    <scope>NUCLEOTIDE SEQUENCE [LARGE SCALE GENOMIC DNA]</scope>
    <source>
        <strain>P125109</strain>
    </source>
</reference>